<sequence>MSQNSSSLLETWRQVVADLTTLSQQADSGFDPLTPTQRAYLNLTKPIAIVDGYAVLSTPNAMAKNVIENDLGDALTRVLSLRMGRSFSLAVSVEPEQEIPETPAQQEFKYQPDAPVISSNKAPKQYEVGGRGGASTSDGWERTHSAPAPEPHPAPIADPEPELATPQRIPRETPAHNPNREVSLNPKYTFESFVIGPFNRFANAAAVAVAESPAKAFNPLFISGGSGLGKTHLLHAVGNYAQELQPGLRIKYVSSEEFTNDYINSVRDDRQETFKRRYRNLDILMVDDIQFLAGKEGTQEEFFHTFNALHQADKQIILSSDRPPKQLTTLEDRLRTRFEGGLITDIQPPDLETRIAILMKKAQTDGTHVDREVLELIASRFESSIRELEGALIRVSAYSSLINQPIDKEMAIVALRDILPEPEDMEITAPVIMEVTAEYFEISVDTLRGAGKTRAVAHARQLAMYLCRELTDMSLPKIGDVFGGKDHTTVMYADRKIRQEMTEKRDTYDEIQQLTQLIKSRGRN</sequence>
<name>DNAA_CORGB</name>
<evidence type="ECO:0000255" key="1">
    <source>
        <dbReference type="HAMAP-Rule" id="MF_00377"/>
    </source>
</evidence>
<evidence type="ECO:0000256" key="2">
    <source>
        <dbReference type="SAM" id="MobiDB-lite"/>
    </source>
</evidence>
<proteinExistence type="inferred from homology"/>
<organism>
    <name type="scientific">Corynebacterium glutamicum (strain R)</name>
    <dbReference type="NCBI Taxonomy" id="340322"/>
    <lineage>
        <taxon>Bacteria</taxon>
        <taxon>Bacillati</taxon>
        <taxon>Actinomycetota</taxon>
        <taxon>Actinomycetes</taxon>
        <taxon>Mycobacteriales</taxon>
        <taxon>Corynebacteriaceae</taxon>
        <taxon>Corynebacterium</taxon>
    </lineage>
</organism>
<dbReference type="EMBL" id="AP009044">
    <property type="protein sequence ID" value="BAF52962.1"/>
    <property type="molecule type" value="Genomic_DNA"/>
</dbReference>
<dbReference type="RefSeq" id="WP_003855327.1">
    <property type="nucleotide sequence ID" value="NC_009342.1"/>
</dbReference>
<dbReference type="SMR" id="A4Q9R9"/>
<dbReference type="KEGG" id="cgt:cgR_0001"/>
<dbReference type="HOGENOM" id="CLU_026910_2_0_11"/>
<dbReference type="PhylomeDB" id="A4Q9R9"/>
<dbReference type="Proteomes" id="UP000006698">
    <property type="component" value="Chromosome"/>
</dbReference>
<dbReference type="GO" id="GO:0005737">
    <property type="term" value="C:cytoplasm"/>
    <property type="evidence" value="ECO:0007669"/>
    <property type="project" value="UniProtKB-SubCell"/>
</dbReference>
<dbReference type="GO" id="GO:0005886">
    <property type="term" value="C:plasma membrane"/>
    <property type="evidence" value="ECO:0007669"/>
    <property type="project" value="TreeGrafter"/>
</dbReference>
<dbReference type="GO" id="GO:0005524">
    <property type="term" value="F:ATP binding"/>
    <property type="evidence" value="ECO:0007669"/>
    <property type="project" value="UniProtKB-UniRule"/>
</dbReference>
<dbReference type="GO" id="GO:0016887">
    <property type="term" value="F:ATP hydrolysis activity"/>
    <property type="evidence" value="ECO:0007669"/>
    <property type="project" value="InterPro"/>
</dbReference>
<dbReference type="GO" id="GO:0003688">
    <property type="term" value="F:DNA replication origin binding"/>
    <property type="evidence" value="ECO:0007669"/>
    <property type="project" value="UniProtKB-UniRule"/>
</dbReference>
<dbReference type="GO" id="GO:0008289">
    <property type="term" value="F:lipid binding"/>
    <property type="evidence" value="ECO:0007669"/>
    <property type="project" value="UniProtKB-KW"/>
</dbReference>
<dbReference type="GO" id="GO:0006270">
    <property type="term" value="P:DNA replication initiation"/>
    <property type="evidence" value="ECO:0007669"/>
    <property type="project" value="UniProtKB-UniRule"/>
</dbReference>
<dbReference type="GO" id="GO:0006275">
    <property type="term" value="P:regulation of DNA replication"/>
    <property type="evidence" value="ECO:0007669"/>
    <property type="project" value="UniProtKB-UniRule"/>
</dbReference>
<dbReference type="CDD" id="cd00009">
    <property type="entry name" value="AAA"/>
    <property type="match status" value="1"/>
</dbReference>
<dbReference type="CDD" id="cd06571">
    <property type="entry name" value="Bac_DnaA_C"/>
    <property type="match status" value="1"/>
</dbReference>
<dbReference type="FunFam" id="1.10.1750.10:FF:000002">
    <property type="entry name" value="Chromosomal replication initiator protein DnaA"/>
    <property type="match status" value="1"/>
</dbReference>
<dbReference type="FunFam" id="1.10.8.60:FF:000003">
    <property type="entry name" value="Chromosomal replication initiator protein DnaA"/>
    <property type="match status" value="1"/>
</dbReference>
<dbReference type="FunFam" id="3.40.50.300:FF:000150">
    <property type="entry name" value="Chromosomal replication initiator protein DnaA"/>
    <property type="match status" value="1"/>
</dbReference>
<dbReference type="Gene3D" id="1.10.1750.10">
    <property type="match status" value="1"/>
</dbReference>
<dbReference type="Gene3D" id="1.10.8.60">
    <property type="match status" value="1"/>
</dbReference>
<dbReference type="Gene3D" id="3.40.50.300">
    <property type="entry name" value="P-loop containing nucleotide triphosphate hydrolases"/>
    <property type="match status" value="1"/>
</dbReference>
<dbReference type="HAMAP" id="MF_00377">
    <property type="entry name" value="DnaA_bact"/>
    <property type="match status" value="1"/>
</dbReference>
<dbReference type="InterPro" id="IPR003593">
    <property type="entry name" value="AAA+_ATPase"/>
</dbReference>
<dbReference type="InterPro" id="IPR001957">
    <property type="entry name" value="Chromosome_initiator_DnaA"/>
</dbReference>
<dbReference type="InterPro" id="IPR020591">
    <property type="entry name" value="Chromosome_initiator_DnaA-like"/>
</dbReference>
<dbReference type="InterPro" id="IPR018312">
    <property type="entry name" value="Chromosome_initiator_DnaA_CS"/>
</dbReference>
<dbReference type="InterPro" id="IPR013159">
    <property type="entry name" value="DnaA_C"/>
</dbReference>
<dbReference type="InterPro" id="IPR013317">
    <property type="entry name" value="DnaA_dom"/>
</dbReference>
<dbReference type="InterPro" id="IPR027417">
    <property type="entry name" value="P-loop_NTPase"/>
</dbReference>
<dbReference type="InterPro" id="IPR010921">
    <property type="entry name" value="Trp_repressor/repl_initiator"/>
</dbReference>
<dbReference type="NCBIfam" id="TIGR00362">
    <property type="entry name" value="DnaA"/>
    <property type="match status" value="1"/>
</dbReference>
<dbReference type="NCBIfam" id="NF010686">
    <property type="entry name" value="PRK14086.1"/>
    <property type="match status" value="1"/>
</dbReference>
<dbReference type="PANTHER" id="PTHR30050">
    <property type="entry name" value="CHROMOSOMAL REPLICATION INITIATOR PROTEIN DNAA"/>
    <property type="match status" value="1"/>
</dbReference>
<dbReference type="PANTHER" id="PTHR30050:SF2">
    <property type="entry name" value="CHROMOSOMAL REPLICATION INITIATOR PROTEIN DNAA"/>
    <property type="match status" value="1"/>
</dbReference>
<dbReference type="Pfam" id="PF00308">
    <property type="entry name" value="Bac_DnaA"/>
    <property type="match status" value="1"/>
</dbReference>
<dbReference type="Pfam" id="PF08299">
    <property type="entry name" value="Bac_DnaA_C"/>
    <property type="match status" value="1"/>
</dbReference>
<dbReference type="PRINTS" id="PR00051">
    <property type="entry name" value="DNAA"/>
</dbReference>
<dbReference type="SMART" id="SM00382">
    <property type="entry name" value="AAA"/>
    <property type="match status" value="1"/>
</dbReference>
<dbReference type="SMART" id="SM00760">
    <property type="entry name" value="Bac_DnaA_C"/>
    <property type="match status" value="1"/>
</dbReference>
<dbReference type="SUPFAM" id="SSF52540">
    <property type="entry name" value="P-loop containing nucleoside triphosphate hydrolases"/>
    <property type="match status" value="1"/>
</dbReference>
<dbReference type="SUPFAM" id="SSF48295">
    <property type="entry name" value="TrpR-like"/>
    <property type="match status" value="1"/>
</dbReference>
<dbReference type="PROSITE" id="PS01008">
    <property type="entry name" value="DNAA"/>
    <property type="match status" value="1"/>
</dbReference>
<comment type="function">
    <text evidence="1">Plays an essential role in the initiation and regulation of chromosomal replication. ATP-DnaA binds to the origin of replication (oriC) to initiate formation of the DNA replication initiation complex once per cell cycle. Binds the DnaA box (a 9 base pair repeat at the origin) and separates the double-stranded (ds)DNA. Forms a right-handed helical filament on oriC DNA; dsDNA binds to the exterior of the filament while single-stranded (ss)DNA is stabiized in the filament's interior. The ATP-DnaA-oriC complex binds and stabilizes one strand of the AT-rich DNA unwinding element (DUE), permitting loading of DNA polymerase. After initiation quickly degrades to an ADP-DnaA complex that is not apt for DNA replication. Binds acidic phospholipids.</text>
</comment>
<comment type="subunit">
    <text evidence="1">Oligomerizes as a right-handed, spiral filament on DNA at oriC.</text>
</comment>
<comment type="subcellular location">
    <subcellularLocation>
        <location evidence="1">Cytoplasm</location>
    </subcellularLocation>
</comment>
<comment type="domain">
    <text evidence="1">Domain I is involved in oligomerization and binding regulators, domain II is flexibile and of varying length in different bacteria, domain III forms the AAA+ region, while domain IV binds dsDNA.</text>
</comment>
<comment type="similarity">
    <text evidence="1">Belongs to the DnaA family.</text>
</comment>
<reference key="1">
    <citation type="journal article" date="2007" name="Microbiology">
        <title>Comparative analysis of the Corynebacterium glutamicum group and complete genome sequence of strain R.</title>
        <authorList>
            <person name="Yukawa H."/>
            <person name="Omumasaba C.A."/>
            <person name="Nonaka H."/>
            <person name="Kos P."/>
            <person name="Okai N."/>
            <person name="Suzuki N."/>
            <person name="Suda M."/>
            <person name="Tsuge Y."/>
            <person name="Watanabe J."/>
            <person name="Ikeda Y."/>
            <person name="Vertes A.A."/>
            <person name="Inui M."/>
        </authorList>
    </citation>
    <scope>NUCLEOTIDE SEQUENCE [LARGE SCALE GENOMIC DNA]</scope>
    <source>
        <strain>R</strain>
    </source>
</reference>
<gene>
    <name evidence="1" type="primary">dnaA</name>
    <name type="ordered locus">cgR_0001</name>
</gene>
<accession>A4Q9R9</accession>
<feature type="chain" id="PRO_1000048640" description="Chromosomal replication initiator protein DnaA">
    <location>
        <begin position="1"/>
        <end position="524"/>
    </location>
</feature>
<feature type="region of interest" description="Domain I, interacts with DnaA modulators" evidence="1">
    <location>
        <begin position="1"/>
        <end position="105"/>
    </location>
</feature>
<feature type="region of interest" description="Disordered" evidence="2">
    <location>
        <begin position="95"/>
        <end position="183"/>
    </location>
</feature>
<feature type="region of interest" description="Domain II" evidence="1">
    <location>
        <begin position="106"/>
        <end position="182"/>
    </location>
</feature>
<feature type="region of interest" description="Domain III, AAA+ region" evidence="1">
    <location>
        <begin position="183"/>
        <end position="399"/>
    </location>
</feature>
<feature type="region of interest" description="Domain IV, binds dsDNA" evidence="1">
    <location>
        <begin position="400"/>
        <end position="524"/>
    </location>
</feature>
<feature type="compositionally biased region" description="Pro residues" evidence="2">
    <location>
        <begin position="148"/>
        <end position="158"/>
    </location>
</feature>
<feature type="binding site" evidence="1">
    <location>
        <position position="227"/>
    </location>
    <ligand>
        <name>ATP</name>
        <dbReference type="ChEBI" id="CHEBI:30616"/>
    </ligand>
</feature>
<feature type="binding site" evidence="1">
    <location>
        <position position="229"/>
    </location>
    <ligand>
        <name>ATP</name>
        <dbReference type="ChEBI" id="CHEBI:30616"/>
    </ligand>
</feature>
<feature type="binding site" evidence="1">
    <location>
        <position position="230"/>
    </location>
    <ligand>
        <name>ATP</name>
        <dbReference type="ChEBI" id="CHEBI:30616"/>
    </ligand>
</feature>
<feature type="binding site" evidence="1">
    <location>
        <position position="231"/>
    </location>
    <ligand>
        <name>ATP</name>
        <dbReference type="ChEBI" id="CHEBI:30616"/>
    </ligand>
</feature>
<keyword id="KW-0067">ATP-binding</keyword>
<keyword id="KW-0963">Cytoplasm</keyword>
<keyword id="KW-0235">DNA replication</keyword>
<keyword id="KW-0238">DNA-binding</keyword>
<keyword id="KW-0446">Lipid-binding</keyword>
<keyword id="KW-0547">Nucleotide-binding</keyword>
<protein>
    <recommendedName>
        <fullName evidence="1">Chromosomal replication initiator protein DnaA</fullName>
    </recommendedName>
</protein>